<proteinExistence type="evidence at protein level"/>
<reference key="1">
    <citation type="journal article" date="1990" name="Nucleic Acids Res.">
        <title>Sequence of the cDNA encoding rat furin, a possible propeptide-processing endoprotease.</title>
        <authorList>
            <person name="Misumi Y."/>
            <person name="Sohoda M."/>
            <person name="Ikehara Y."/>
        </authorList>
    </citation>
    <scope>NUCLEOTIDE SEQUENCE [MRNA]</scope>
    <source>
        <strain>Wistar</strain>
        <tissue>Liver</tissue>
    </source>
</reference>
<reference key="2">
    <citation type="journal article" date="1997" name="J. Biol. Chem.">
        <title>Stretch-induced hypertrophic growth of cardiocytes and processing of brain-type natriuretic peptide are controlled by proprotein-processing endoprotease furin.</title>
        <authorList>
            <person name="Sawada Y."/>
            <person name="Suda M."/>
            <person name="Yokoyama H."/>
            <person name="Kanda T."/>
            <person name="Sakamaki T."/>
            <person name="Tanaka S."/>
            <person name="Nagai R."/>
            <person name="Abe S."/>
            <person name="Takeuchi T."/>
        </authorList>
    </citation>
    <scope>FUNCTION</scope>
    <scope>CATALYTIC ACTIVITY</scope>
    <scope>ACTIVITY REGULATION</scope>
    <scope>TISSUE SPECIFICITY</scope>
    <scope>INDUCTION BY MECHANICAL STRETCH</scope>
</reference>
<reference key="3">
    <citation type="journal article" date="1998" name="Cell">
        <title>PACS-1 defines a novel gene family of cytosolic sorting proteins required for trans-Golgi network localization.</title>
        <authorList>
            <person name="Wan L."/>
            <person name="Molloy S.S."/>
            <person name="Thomas L."/>
            <person name="Liu G."/>
            <person name="Xiang Y."/>
            <person name="Rybak S.L."/>
            <person name="Thomas G."/>
        </authorList>
    </citation>
    <scope>INTERACTION WITH PACS1</scope>
    <source>
        <tissue>Brain</tissue>
    </source>
</reference>
<gene>
    <name type="primary">Furin</name>
    <name type="synonym">Fur</name>
    <name type="synonym">Pcsk3</name>
</gene>
<keyword id="KW-0068">Autocatalytic cleavage</keyword>
<keyword id="KW-0106">Calcium</keyword>
<keyword id="KW-1003">Cell membrane</keyword>
<keyword id="KW-0165">Cleavage on pair of basic residues</keyword>
<keyword id="KW-1015">Disulfide bond</keyword>
<keyword id="KW-0967">Endosome</keyword>
<keyword id="KW-0325">Glycoprotein</keyword>
<keyword id="KW-0333">Golgi apparatus</keyword>
<keyword id="KW-0358">Heparin-binding</keyword>
<keyword id="KW-0378">Hydrolase</keyword>
<keyword id="KW-0472">Membrane</keyword>
<keyword id="KW-0479">Metal-binding</keyword>
<keyword id="KW-0597">Phosphoprotein</keyword>
<keyword id="KW-0645">Protease</keyword>
<keyword id="KW-1185">Reference proteome</keyword>
<keyword id="KW-0677">Repeat</keyword>
<keyword id="KW-0964">Secreted</keyword>
<keyword id="KW-0720">Serine protease</keyword>
<keyword id="KW-0732">Signal</keyword>
<keyword id="KW-0812">Transmembrane</keyword>
<keyword id="KW-1133">Transmembrane helix</keyword>
<keyword id="KW-0865">Zymogen</keyword>
<name>FURIN_RAT</name>
<comment type="function">
    <text evidence="1 2 9">Ubiquitous endoprotease within constitutive secretory pathways capable of cleavage at the RX(K/R)R consensus motif (PubMed:9252368). Mediates processing of TGFB1, an essential step in TGF-beta-1 activation (By similarity). Converts through proteolytic cleavage the non-functional Brain natriuretic factor prohormone into its active hormone BNP(1-45) (PubMed:9252368). By mediating processing of accessory subunit ATP6AP1/Ac45 of the V-ATPase, regulates the acidification of dense-core secretory granules in islets of Langerhans cells (By similarity).</text>
</comment>
<comment type="catalytic activity">
    <reaction evidence="9">
        <text>Release of mature proteins from their proproteins by cleavage of -Arg-Xaa-Yaa-Arg-|-Zaa- bonds, where Xaa can be any amino acid and Yaa is Arg or Lys. Releases albumin, complement component C3 and von Willebrand factor from their respective precursors.</text>
        <dbReference type="EC" id="3.4.21.75"/>
    </reaction>
</comment>
<comment type="cofactor">
    <cofactor evidence="1">
        <name>Ca(2+)</name>
        <dbReference type="ChEBI" id="CHEBI:29108"/>
    </cofactor>
    <text evidence="1">Binds 3 calcium ions per subunit.</text>
</comment>
<comment type="activity regulation">
    <text evidence="1 9">Inhibited by the not secondly cleaved propeptide (By similarity). Inhibited by m-guanidinomethyl-phenylacetyl-Arg-Val-Arg-(amidomethyl)-benzamidine (m-guanidinomethyl-Phac-RVR-Amb) and 4-guanidinomethyl-phenylacetyl-Arg-Tle-Arg-4-amidinobenzylamide (MI-1148) (By similarity). Inhibited by Decanoyl-Arg-Val-Lys-Arg-chloromethylketone (decanoyl-RVKR-CMK) (PubMed:9252368). Inhibited by heparin/heparan sulfate-binding (By similarity).</text>
</comment>
<comment type="subunit">
    <text evidence="2 10">Interacts with FLNA (By similarity). Binds to PACS1 which mediates TGN localization and connection to clathrin adapters (PubMed:9695949).</text>
</comment>
<comment type="subcellular location">
    <subcellularLocation>
        <location evidence="1">Golgi apparatus</location>
        <location evidence="1">trans-Golgi network membrane</location>
        <topology evidence="11">Single-pass type I membrane protein</topology>
    </subcellularLocation>
    <subcellularLocation>
        <location evidence="1">Cell membrane</location>
        <topology evidence="11">Single-pass type I membrane protein</topology>
    </subcellularLocation>
    <subcellularLocation>
        <location evidence="3">Secreted</location>
    </subcellularLocation>
    <subcellularLocation>
        <location evidence="1">Endosome membrane</location>
        <topology evidence="11">Single-pass type I membrane protein</topology>
    </subcellularLocation>
    <text evidence="1">Shuttles between the trans-Golgi network and the cell surface. Propeptide cleavage is a prerequisite for exit of furin molecules out of the endoplasmic reticulum (ER). A second cleavage within the propeptide occurs in the trans Golgi network (TGN), followed by the release of the propeptide and the activation of furin.</text>
</comment>
<comment type="tissue specificity">
    <text evidence="9">Cardiocytes (at protein level).</text>
</comment>
<comment type="induction">
    <text evidence="9">Up-regulated in cardiocytes in response to stretching for 48hr.</text>
</comment>
<comment type="domain">
    <text evidence="1">Contains a cytoplasmic domain responsible for its TGN localization and recycling from the cell surface.</text>
</comment>
<comment type="PTM">
    <text evidence="1">The inhibition peptide, which plays the role of an intramolecular chaperone, is autocatalytically removed in the endoplasmic reticulum (ER) and remains non-covalently bound to furin as a potent autoinhibitor. Following transport to the trans Golgi, a second cleavage within the inhibition propeptide results in propeptide dissociation and furin activation.</text>
</comment>
<comment type="PTM">
    <text evidence="1">Phosphorylation is required for TGN localization of the endoprotease. In vivo, exists as di-, mono- and non-phosphorylated forms.</text>
</comment>
<comment type="similarity">
    <text evidence="11">Belongs to the peptidase S8 family. Furin subfamily.</text>
</comment>
<evidence type="ECO:0000250" key="1">
    <source>
        <dbReference type="UniProtKB" id="P09958"/>
    </source>
</evidence>
<evidence type="ECO:0000250" key="2">
    <source>
        <dbReference type="UniProtKB" id="P23188"/>
    </source>
</evidence>
<evidence type="ECO:0000250" key="3">
    <source>
        <dbReference type="UniProtKB" id="Q28193"/>
    </source>
</evidence>
<evidence type="ECO:0000255" key="4"/>
<evidence type="ECO:0000255" key="5">
    <source>
        <dbReference type="PROSITE-ProRule" id="PRU00293"/>
    </source>
</evidence>
<evidence type="ECO:0000255" key="6">
    <source>
        <dbReference type="PROSITE-ProRule" id="PRU01173"/>
    </source>
</evidence>
<evidence type="ECO:0000255" key="7">
    <source>
        <dbReference type="PROSITE-ProRule" id="PRU01240"/>
    </source>
</evidence>
<evidence type="ECO:0000256" key="8">
    <source>
        <dbReference type="SAM" id="MobiDB-lite"/>
    </source>
</evidence>
<evidence type="ECO:0000269" key="9">
    <source>
    </source>
</evidence>
<evidence type="ECO:0000269" key="10">
    <source>
    </source>
</evidence>
<evidence type="ECO:0000305" key="11"/>
<sequence length="793" mass="86653">MELRPWLLWVVAAAGALVLLAAEARGQKIFTNTWAVHISGGPAVADSVARKHGFHNLGQIFGDYYHFWHRAVTKRSLSPHRPRHSRLQRVPQVKWLEQQVAKQRAKRDVYQEPTDPKFPQQWYLSGVTQRDLNVKEAWAQGFTGRGIVVSILDDGIEKNHPDLAGNYDPGASFDVNDQDPDPQPRYTQMNDNRHGTRCAGEVAAVANNGVCGVGVAYNARIGGVRMLDGEVTDAVEARSLGLNPNHIHIYSASWGPEDDGKTVDGPARLAEEAFFRGVSQGRGGLGSIFVWASGNGGREHDSCNCDGYTNSIYTLSISSATQFGNVPWYSEACSSTLATTYSSGNQNEKQIVTTDLRQKCTESHTGTSASAPLAAGIIALTLEANKNLTWRDMQHLVVQTSKPAHLNANDWATNGVGRKVSHSYGYGLLDAGAMVALAQNWTTVAPQRKCIIEILAEPKDIGKRLEVRKTVTACLGEPNHISRLEHVQARLTLSYNRRGDLAIHLISPMGTRSTLLAARPHDYSADGFNDWAFMTTHSWDEDPSGEWVLEIENTSEANNYGTLTKFTLVLYGTASEGLSAPPESSGCKTLTSSQACVVCEEGFSLHQKSCVQRCPPGFTPQVLDTHYSTENDVEIIRASVCTPCHASCATCQGPAPTDCLSCPSHASLDPVEQTCSRQSQSSRESRPQQPPPALRPEVEVEPRLRAGLASHLPEVLAGLSCLIIALIFGIVFLFLHRCSGFSFRGVKVYTMDRGLISYKGLPPEAWQEECPSDSEEDEGRGERTAFIKDQSAL</sequence>
<feature type="signal peptide" evidence="4">
    <location>
        <begin position="1"/>
        <end position="26"/>
    </location>
</feature>
<feature type="propeptide" id="PRO_0000027032" description="Inhibition peptide" evidence="1">
    <location>
        <begin position="27"/>
        <end position="107"/>
    </location>
</feature>
<feature type="chain" id="PRO_0000027033" description="Furin">
    <location>
        <begin position="108"/>
        <end position="793"/>
    </location>
</feature>
<feature type="topological domain" description="Lumenal" evidence="11">
    <location>
        <begin position="108"/>
        <end position="714"/>
    </location>
</feature>
<feature type="transmembrane region" description="Helical" evidence="4">
    <location>
        <begin position="715"/>
        <end position="735"/>
    </location>
</feature>
<feature type="topological domain" description="Cytoplasmic" evidence="11">
    <location>
        <begin position="736"/>
        <end position="793"/>
    </location>
</feature>
<feature type="domain" description="Peptidase S8" evidence="7">
    <location>
        <begin position="121"/>
        <end position="435"/>
    </location>
</feature>
<feature type="domain" description="P/Homo B" evidence="6">
    <location>
        <begin position="444"/>
        <end position="576"/>
    </location>
</feature>
<feature type="repeat" description="FU 1" evidence="4">
    <location>
        <begin position="577"/>
        <end position="620"/>
    </location>
</feature>
<feature type="repeat" description="FU 2" evidence="4">
    <location>
        <begin position="638"/>
        <end position="681"/>
    </location>
</feature>
<feature type="region of interest" description="Disordered" evidence="8">
    <location>
        <begin position="160"/>
        <end position="186"/>
    </location>
</feature>
<feature type="region of interest" description="Disordered" evidence="8">
    <location>
        <begin position="673"/>
        <end position="698"/>
    </location>
</feature>
<feature type="region of interest" description="Cell surface signal" evidence="1">
    <location>
        <begin position="758"/>
        <end position="761"/>
    </location>
</feature>
<feature type="region of interest" description="Disordered" evidence="8">
    <location>
        <begin position="766"/>
        <end position="793"/>
    </location>
</feature>
<feature type="short sequence motif" description="Cell attachment site" evidence="5">
    <location>
        <begin position="498"/>
        <end position="500"/>
    </location>
</feature>
<feature type="short sequence motif" description="Trans Golgi network signal" evidence="1">
    <location>
        <begin position="772"/>
        <end position="778"/>
    </location>
</feature>
<feature type="compositionally biased region" description="Acidic residues" evidence="8">
    <location>
        <begin position="766"/>
        <end position="779"/>
    </location>
</feature>
<feature type="active site" description="Charge relay system" evidence="7">
    <location>
        <position position="153"/>
    </location>
</feature>
<feature type="active site" description="Charge relay system" evidence="7">
    <location>
        <position position="194"/>
    </location>
</feature>
<feature type="active site" description="Charge relay system" evidence="7">
    <location>
        <position position="368"/>
    </location>
</feature>
<feature type="binding site" evidence="1">
    <location>
        <position position="115"/>
    </location>
    <ligand>
        <name>Ca(2+)</name>
        <dbReference type="ChEBI" id="CHEBI:29108"/>
        <label>1</label>
    </ligand>
</feature>
<feature type="binding site" evidence="1">
    <location>
        <position position="154"/>
    </location>
    <ligand>
        <name>substrate</name>
    </ligand>
</feature>
<feature type="binding site" evidence="1">
    <location>
        <position position="162"/>
    </location>
    <ligand>
        <name>Ca(2+)</name>
        <dbReference type="ChEBI" id="CHEBI:29108"/>
        <label>1</label>
    </ligand>
</feature>
<feature type="binding site" evidence="1">
    <location>
        <position position="174"/>
    </location>
    <ligand>
        <name>Ca(2+)</name>
        <dbReference type="ChEBI" id="CHEBI:29108"/>
        <label>2</label>
    </ligand>
</feature>
<feature type="binding site" evidence="1">
    <location>
        <position position="179"/>
    </location>
    <ligand>
        <name>Ca(2+)</name>
        <dbReference type="ChEBI" id="CHEBI:29108"/>
        <label>2</label>
    </ligand>
</feature>
<feature type="binding site" evidence="1">
    <location>
        <position position="181"/>
    </location>
    <ligand>
        <name>Ca(2+)</name>
        <dbReference type="ChEBI" id="CHEBI:29108"/>
        <label>2</label>
    </ligand>
</feature>
<feature type="binding site" evidence="1">
    <location>
        <begin position="191"/>
        <end position="192"/>
    </location>
    <ligand>
        <name>substrate</name>
    </ligand>
</feature>
<feature type="binding site" evidence="1">
    <location>
        <position position="205"/>
    </location>
    <ligand>
        <name>Ca(2+)</name>
        <dbReference type="ChEBI" id="CHEBI:29108"/>
        <label>1</label>
    </ligand>
</feature>
<feature type="binding site" evidence="1">
    <location>
        <position position="208"/>
    </location>
    <ligand>
        <name>Ca(2+)</name>
        <dbReference type="ChEBI" id="CHEBI:29108"/>
        <label>1</label>
    </ligand>
</feature>
<feature type="binding site" evidence="1">
    <location>
        <position position="210"/>
    </location>
    <ligand>
        <name>Ca(2+)</name>
        <dbReference type="ChEBI" id="CHEBI:29108"/>
        <label>1</label>
    </ligand>
</feature>
<feature type="binding site" evidence="1">
    <location>
        <position position="212"/>
    </location>
    <ligand>
        <name>Ca(2+)</name>
        <dbReference type="ChEBI" id="CHEBI:29108"/>
        <label>1</label>
    </ligand>
</feature>
<feature type="binding site" evidence="1">
    <location>
        <position position="236"/>
    </location>
    <ligand>
        <name>substrate</name>
    </ligand>
</feature>
<feature type="binding site" evidence="1">
    <location>
        <begin position="253"/>
        <end position="258"/>
    </location>
    <ligand>
        <name>substrate</name>
    </ligand>
</feature>
<feature type="binding site" evidence="1">
    <location>
        <position position="258"/>
    </location>
    <ligand>
        <name>Ca(2+)</name>
        <dbReference type="ChEBI" id="CHEBI:29108"/>
        <label>3</label>
    </ligand>
</feature>
<feature type="binding site" evidence="1">
    <location>
        <position position="264"/>
    </location>
    <ligand>
        <name>substrate</name>
    </ligand>
</feature>
<feature type="binding site" evidence="1">
    <location>
        <begin position="292"/>
        <end position="295"/>
    </location>
    <ligand>
        <name>substrate</name>
    </ligand>
</feature>
<feature type="binding site" evidence="1">
    <location>
        <position position="301"/>
    </location>
    <ligand>
        <name>Ca(2+)</name>
        <dbReference type="ChEBI" id="CHEBI:29108"/>
        <label>3</label>
    </ligand>
</feature>
<feature type="binding site" evidence="1">
    <location>
        <position position="306"/>
    </location>
    <ligand>
        <name>substrate</name>
    </ligand>
</feature>
<feature type="binding site" evidence="1">
    <location>
        <position position="308"/>
    </location>
    <ligand>
        <name>substrate</name>
    </ligand>
</feature>
<feature type="binding site" evidence="1">
    <location>
        <position position="331"/>
    </location>
    <ligand>
        <name>Ca(2+)</name>
        <dbReference type="ChEBI" id="CHEBI:29108"/>
        <label>3</label>
    </ligand>
</feature>
<feature type="binding site" evidence="1">
    <location>
        <position position="368"/>
    </location>
    <ligand>
        <name>substrate</name>
    </ligand>
</feature>
<feature type="site" description="Cleavage, second; by autolysis" evidence="1">
    <location>
        <begin position="75"/>
        <end position="76"/>
    </location>
</feature>
<feature type="site" description="Cleavage, first; by autolysis" evidence="1">
    <location>
        <begin position="107"/>
        <end position="108"/>
    </location>
</feature>
<feature type="modified residue" description="Phosphoserine" evidence="1">
    <location>
        <position position="772"/>
    </location>
</feature>
<feature type="modified residue" description="Phosphoserine" evidence="1">
    <location>
        <position position="774"/>
    </location>
</feature>
<feature type="glycosylation site" description="N-linked (GlcNAc...) asparagine" evidence="4">
    <location>
        <position position="387"/>
    </location>
</feature>
<feature type="glycosylation site" description="N-linked (GlcNAc...) asparagine" evidence="4">
    <location>
        <position position="440"/>
    </location>
</feature>
<feature type="glycosylation site" description="N-linked (GlcNAc...) asparagine" evidence="4">
    <location>
        <position position="553"/>
    </location>
</feature>
<feature type="disulfide bond" evidence="2">
    <location>
        <begin position="211"/>
        <end position="360"/>
    </location>
</feature>
<feature type="disulfide bond" evidence="2">
    <location>
        <begin position="303"/>
        <end position="333"/>
    </location>
</feature>
<feature type="disulfide bond" evidence="2">
    <location>
        <begin position="450"/>
        <end position="474"/>
    </location>
</feature>
<accession>P23377</accession>
<dbReference type="EC" id="3.4.21.75" evidence="9"/>
<dbReference type="EMBL" id="X55660">
    <property type="protein sequence ID" value="CAA39193.1"/>
    <property type="molecule type" value="mRNA"/>
</dbReference>
<dbReference type="PIR" id="S13106">
    <property type="entry name" value="KXRTF"/>
</dbReference>
<dbReference type="RefSeq" id="NP_062204.1">
    <property type="nucleotide sequence ID" value="NM_019331.1"/>
</dbReference>
<dbReference type="SMR" id="P23377"/>
<dbReference type="FunCoup" id="P23377">
    <property type="interactions" value="155"/>
</dbReference>
<dbReference type="STRING" id="10116.ENSRNOP00000015521"/>
<dbReference type="MEROPS" id="S08.071"/>
<dbReference type="GlyCosmos" id="P23377">
    <property type="glycosylation" value="3 sites, No reported glycans"/>
</dbReference>
<dbReference type="GlyGen" id="P23377">
    <property type="glycosylation" value="4 sites"/>
</dbReference>
<dbReference type="PhosphoSitePlus" id="P23377"/>
<dbReference type="PaxDb" id="10116-ENSRNOP00000015521"/>
<dbReference type="GeneID" id="54281"/>
<dbReference type="KEGG" id="rno:54281"/>
<dbReference type="UCSC" id="RGD:3274">
    <property type="organism name" value="rat"/>
</dbReference>
<dbReference type="AGR" id="RGD:3274"/>
<dbReference type="CTD" id="5045"/>
<dbReference type="RGD" id="3274">
    <property type="gene designation" value="Furin"/>
</dbReference>
<dbReference type="eggNOG" id="KOG3525">
    <property type="taxonomic scope" value="Eukaryota"/>
</dbReference>
<dbReference type="InParanoid" id="P23377"/>
<dbReference type="PhylomeDB" id="P23377"/>
<dbReference type="Reactome" id="R-RNO-1442490">
    <property type="pathway name" value="Collagen degradation"/>
</dbReference>
<dbReference type="Reactome" id="R-RNO-1566948">
    <property type="pathway name" value="Elastic fibre formation"/>
</dbReference>
<dbReference type="Reactome" id="R-RNO-1592389">
    <property type="pathway name" value="Activation of Matrix Metalloproteinases"/>
</dbReference>
<dbReference type="Reactome" id="R-RNO-159782">
    <property type="pathway name" value="Removal of aminoterminal propeptides from gamma-carboxylated proteins"/>
</dbReference>
<dbReference type="Reactome" id="R-RNO-167060">
    <property type="pathway name" value="NGF processing"/>
</dbReference>
<dbReference type="Reactome" id="R-RNO-186797">
    <property type="pathway name" value="Signaling by PDGF"/>
</dbReference>
<dbReference type="Reactome" id="R-RNO-2173789">
    <property type="pathway name" value="TGF-beta receptor signaling activates SMADs"/>
</dbReference>
<dbReference type="Reactome" id="R-RNO-2173796">
    <property type="pathway name" value="SMAD2/SMAD3:SMAD4 heterotrimer regulates transcription"/>
</dbReference>
<dbReference type="Reactome" id="R-RNO-8963889">
    <property type="pathway name" value="Assembly of active LPL and LIPC lipase complexes"/>
</dbReference>
<dbReference type="PRO" id="PR:P23377"/>
<dbReference type="Proteomes" id="UP000002494">
    <property type="component" value="Unplaced"/>
</dbReference>
<dbReference type="GO" id="GO:0009986">
    <property type="term" value="C:cell surface"/>
    <property type="evidence" value="ECO:0000266"/>
    <property type="project" value="RGD"/>
</dbReference>
<dbReference type="GO" id="GO:0005783">
    <property type="term" value="C:endoplasmic reticulum"/>
    <property type="evidence" value="ECO:0000266"/>
    <property type="project" value="RGD"/>
</dbReference>
<dbReference type="GO" id="GO:0005789">
    <property type="term" value="C:endoplasmic reticulum membrane"/>
    <property type="evidence" value="ECO:0000314"/>
    <property type="project" value="RGD"/>
</dbReference>
<dbReference type="GO" id="GO:0010008">
    <property type="term" value="C:endosome membrane"/>
    <property type="evidence" value="ECO:0007669"/>
    <property type="project" value="UniProtKB-SubCell"/>
</dbReference>
<dbReference type="GO" id="GO:0005576">
    <property type="term" value="C:extracellular region"/>
    <property type="evidence" value="ECO:0007669"/>
    <property type="project" value="UniProtKB-SubCell"/>
</dbReference>
<dbReference type="GO" id="GO:0031985">
    <property type="term" value="C:Golgi cisterna"/>
    <property type="evidence" value="ECO:0000314"/>
    <property type="project" value="RGD"/>
</dbReference>
<dbReference type="GO" id="GO:0005796">
    <property type="term" value="C:Golgi lumen"/>
    <property type="evidence" value="ECO:0000266"/>
    <property type="project" value="RGD"/>
</dbReference>
<dbReference type="GO" id="GO:0000139">
    <property type="term" value="C:Golgi membrane"/>
    <property type="evidence" value="ECO:0000266"/>
    <property type="project" value="RGD"/>
</dbReference>
<dbReference type="GO" id="GO:0045121">
    <property type="term" value="C:membrane raft"/>
    <property type="evidence" value="ECO:0000266"/>
    <property type="project" value="RGD"/>
</dbReference>
<dbReference type="GO" id="GO:0005886">
    <property type="term" value="C:plasma membrane"/>
    <property type="evidence" value="ECO:0007669"/>
    <property type="project" value="UniProtKB-SubCell"/>
</dbReference>
<dbReference type="GO" id="GO:0005802">
    <property type="term" value="C:trans-Golgi network"/>
    <property type="evidence" value="ECO:0000266"/>
    <property type="project" value="RGD"/>
</dbReference>
<dbReference type="GO" id="GO:0030140">
    <property type="term" value="C:trans-Golgi network transport vesicle"/>
    <property type="evidence" value="ECO:0000266"/>
    <property type="project" value="RGD"/>
</dbReference>
<dbReference type="GO" id="GO:0004175">
    <property type="term" value="F:endopeptidase activity"/>
    <property type="evidence" value="ECO:0000266"/>
    <property type="project" value="RGD"/>
</dbReference>
<dbReference type="GO" id="GO:1904399">
    <property type="term" value="F:heparan sulfate binding"/>
    <property type="evidence" value="ECO:0000250"/>
    <property type="project" value="UniProtKB"/>
</dbReference>
<dbReference type="GO" id="GO:0008201">
    <property type="term" value="F:heparin binding"/>
    <property type="evidence" value="ECO:0000250"/>
    <property type="project" value="UniProtKB"/>
</dbReference>
<dbReference type="GO" id="GO:0046872">
    <property type="term" value="F:metal ion binding"/>
    <property type="evidence" value="ECO:0007669"/>
    <property type="project" value="UniProtKB-KW"/>
</dbReference>
<dbReference type="GO" id="GO:0048406">
    <property type="term" value="F:nerve growth factor binding"/>
    <property type="evidence" value="ECO:0000266"/>
    <property type="project" value="RGD"/>
</dbReference>
<dbReference type="GO" id="GO:0008233">
    <property type="term" value="F:peptidase activity"/>
    <property type="evidence" value="ECO:0000266"/>
    <property type="project" value="RGD"/>
</dbReference>
<dbReference type="GO" id="GO:0042277">
    <property type="term" value="F:peptide binding"/>
    <property type="evidence" value="ECO:0000266"/>
    <property type="project" value="RGD"/>
</dbReference>
<dbReference type="GO" id="GO:0002020">
    <property type="term" value="F:protease binding"/>
    <property type="evidence" value="ECO:0000266"/>
    <property type="project" value="RGD"/>
</dbReference>
<dbReference type="GO" id="GO:0004252">
    <property type="term" value="F:serine-type endopeptidase activity"/>
    <property type="evidence" value="ECO:0000315"/>
    <property type="project" value="RGD"/>
</dbReference>
<dbReference type="GO" id="GO:0004867">
    <property type="term" value="F:serine-type endopeptidase inhibitor activity"/>
    <property type="evidence" value="ECO:0000266"/>
    <property type="project" value="RGD"/>
</dbReference>
<dbReference type="GO" id="GO:0008236">
    <property type="term" value="F:serine-type peptidase activity"/>
    <property type="evidence" value="ECO:0000266"/>
    <property type="project" value="RGD"/>
</dbReference>
<dbReference type="GO" id="GO:0001825">
    <property type="term" value="P:blastocyst formation"/>
    <property type="evidence" value="ECO:0000266"/>
    <property type="project" value="RGD"/>
</dbReference>
<dbReference type="GO" id="GO:0140447">
    <property type="term" value="P:cytokine precursor processing"/>
    <property type="evidence" value="ECO:0000250"/>
    <property type="project" value="UniProtKB"/>
</dbReference>
<dbReference type="GO" id="GO:0090472">
    <property type="term" value="P:dibasic protein processing"/>
    <property type="evidence" value="ECO:0000266"/>
    <property type="project" value="RGD"/>
</dbReference>
<dbReference type="GO" id="GO:0032804">
    <property type="term" value="P:negative regulation of low-density lipoprotein particle receptor catabolic process"/>
    <property type="evidence" value="ECO:0000266"/>
    <property type="project" value="RGD"/>
</dbReference>
<dbReference type="GO" id="GO:0032911">
    <property type="term" value="P:negative regulation of transforming growth factor beta1 production"/>
    <property type="evidence" value="ECO:0000266"/>
    <property type="project" value="RGD"/>
</dbReference>
<dbReference type="GO" id="GO:0032902">
    <property type="term" value="P:nerve growth factor production"/>
    <property type="evidence" value="ECO:0000266"/>
    <property type="project" value="RGD"/>
</dbReference>
<dbReference type="GO" id="GO:0043043">
    <property type="term" value="P:peptide biosynthetic process"/>
    <property type="evidence" value="ECO:0000266"/>
    <property type="project" value="RGD"/>
</dbReference>
<dbReference type="GO" id="GO:0016486">
    <property type="term" value="P:peptide hormone processing"/>
    <property type="evidence" value="ECO:0000266"/>
    <property type="project" value="RGD"/>
</dbReference>
<dbReference type="GO" id="GO:0030335">
    <property type="term" value="P:positive regulation of cell migration"/>
    <property type="evidence" value="ECO:0000315"/>
    <property type="project" value="RGD"/>
</dbReference>
<dbReference type="GO" id="GO:0030511">
    <property type="term" value="P:positive regulation of transforming growth factor beta receptor signaling pathway"/>
    <property type="evidence" value="ECO:0000315"/>
    <property type="project" value="RGD"/>
</dbReference>
<dbReference type="GO" id="GO:0051604">
    <property type="term" value="P:protein maturation"/>
    <property type="evidence" value="ECO:0000266"/>
    <property type="project" value="RGD"/>
</dbReference>
<dbReference type="GO" id="GO:0016485">
    <property type="term" value="P:protein processing"/>
    <property type="evidence" value="ECO:0000314"/>
    <property type="project" value="RGD"/>
</dbReference>
<dbReference type="GO" id="GO:0032374">
    <property type="term" value="P:regulation of cholesterol transport"/>
    <property type="evidence" value="ECO:0000266"/>
    <property type="project" value="RGD"/>
</dbReference>
<dbReference type="GO" id="GO:0042176">
    <property type="term" value="P:regulation of protein catabolic process"/>
    <property type="evidence" value="ECO:0000266"/>
    <property type="project" value="RGD"/>
</dbReference>
<dbReference type="GO" id="GO:0009966">
    <property type="term" value="P:regulation of signal transduction"/>
    <property type="evidence" value="ECO:0000266"/>
    <property type="project" value="RGD"/>
</dbReference>
<dbReference type="GO" id="GO:0032940">
    <property type="term" value="P:secretion by cell"/>
    <property type="evidence" value="ECO:0000266"/>
    <property type="project" value="RGD"/>
</dbReference>
<dbReference type="GO" id="GO:0006465">
    <property type="term" value="P:signal peptide processing"/>
    <property type="evidence" value="ECO:0000266"/>
    <property type="project" value="RGD"/>
</dbReference>
<dbReference type="GO" id="GO:0019058">
    <property type="term" value="P:viral life cycle"/>
    <property type="evidence" value="ECO:0000266"/>
    <property type="project" value="RGD"/>
</dbReference>
<dbReference type="GO" id="GO:0031638">
    <property type="term" value="P:zymogen activation"/>
    <property type="evidence" value="ECO:0000266"/>
    <property type="project" value="RGD"/>
</dbReference>
<dbReference type="CDD" id="cd00064">
    <property type="entry name" value="FU"/>
    <property type="match status" value="2"/>
</dbReference>
<dbReference type="CDD" id="cd04059">
    <property type="entry name" value="Peptidases_S8_Protein_convertases_Kexins_Furin-like"/>
    <property type="match status" value="1"/>
</dbReference>
<dbReference type="FunFam" id="3.40.50.200:FF:000001">
    <property type="entry name" value="Furin 2, isoform B"/>
    <property type="match status" value="1"/>
</dbReference>
<dbReference type="FunFam" id="2.60.120.260:FF:000034">
    <property type="entry name" value="furin isoform X2"/>
    <property type="match status" value="1"/>
</dbReference>
<dbReference type="FunFam" id="2.10.220.10:FF:000023">
    <property type="entry name" value="Furin, paired basic amino acid cleaving enzyme"/>
    <property type="match status" value="1"/>
</dbReference>
<dbReference type="FunFam" id="3.30.70.850:FF:000001">
    <property type="entry name" value="Proprotein convertase subtilisin/kexin type 5"/>
    <property type="match status" value="1"/>
</dbReference>
<dbReference type="Gene3D" id="2.60.120.260">
    <property type="entry name" value="Galactose-binding domain-like"/>
    <property type="match status" value="1"/>
</dbReference>
<dbReference type="Gene3D" id="2.10.220.10">
    <property type="entry name" value="Hormone Receptor, Insulin-like Growth Factor Receptor 1, Chain A, domain 2"/>
    <property type="match status" value="1"/>
</dbReference>
<dbReference type="Gene3D" id="3.30.70.850">
    <property type="entry name" value="Peptidase S8, pro-domain"/>
    <property type="match status" value="1"/>
</dbReference>
<dbReference type="Gene3D" id="3.40.50.200">
    <property type="entry name" value="Peptidase S8/S53 domain"/>
    <property type="match status" value="1"/>
</dbReference>
<dbReference type="InterPro" id="IPR006212">
    <property type="entry name" value="Furin_repeat"/>
</dbReference>
<dbReference type="InterPro" id="IPR008979">
    <property type="entry name" value="Galactose-bd-like_sf"/>
</dbReference>
<dbReference type="InterPro" id="IPR009030">
    <property type="entry name" value="Growth_fac_rcpt_cys_sf"/>
</dbReference>
<dbReference type="InterPro" id="IPR034182">
    <property type="entry name" value="Kexin/furin"/>
</dbReference>
<dbReference type="InterPro" id="IPR002884">
    <property type="entry name" value="P_dom"/>
</dbReference>
<dbReference type="InterPro" id="IPR000209">
    <property type="entry name" value="Peptidase_S8/S53_dom"/>
</dbReference>
<dbReference type="InterPro" id="IPR036852">
    <property type="entry name" value="Peptidase_S8/S53_dom_sf"/>
</dbReference>
<dbReference type="InterPro" id="IPR023827">
    <property type="entry name" value="Peptidase_S8_Asp-AS"/>
</dbReference>
<dbReference type="InterPro" id="IPR022398">
    <property type="entry name" value="Peptidase_S8_His-AS"/>
</dbReference>
<dbReference type="InterPro" id="IPR023828">
    <property type="entry name" value="Peptidase_S8_Ser-AS"/>
</dbReference>
<dbReference type="InterPro" id="IPR015500">
    <property type="entry name" value="Peptidase_S8_subtilisin-rel"/>
</dbReference>
<dbReference type="InterPro" id="IPR032815">
    <property type="entry name" value="S8_pro-domain"/>
</dbReference>
<dbReference type="InterPro" id="IPR038466">
    <property type="entry name" value="S8_pro-domain_sf"/>
</dbReference>
<dbReference type="PANTHER" id="PTHR42884:SF1">
    <property type="entry name" value="FURIN"/>
    <property type="match status" value="1"/>
</dbReference>
<dbReference type="PANTHER" id="PTHR42884">
    <property type="entry name" value="PROPROTEIN CONVERTASE SUBTILISIN/KEXIN-RELATED"/>
    <property type="match status" value="1"/>
</dbReference>
<dbReference type="Pfam" id="PF01483">
    <property type="entry name" value="P_proprotein"/>
    <property type="match status" value="1"/>
</dbReference>
<dbReference type="Pfam" id="PF00082">
    <property type="entry name" value="Peptidase_S8"/>
    <property type="match status" value="1"/>
</dbReference>
<dbReference type="Pfam" id="PF16470">
    <property type="entry name" value="S8_pro-domain"/>
    <property type="match status" value="1"/>
</dbReference>
<dbReference type="PRINTS" id="PR00723">
    <property type="entry name" value="SUBTILISIN"/>
</dbReference>
<dbReference type="SMART" id="SM00261">
    <property type="entry name" value="FU"/>
    <property type="match status" value="2"/>
</dbReference>
<dbReference type="SUPFAM" id="SSF49785">
    <property type="entry name" value="Galactose-binding domain-like"/>
    <property type="match status" value="1"/>
</dbReference>
<dbReference type="SUPFAM" id="SSF57184">
    <property type="entry name" value="Growth factor receptor domain"/>
    <property type="match status" value="1"/>
</dbReference>
<dbReference type="SUPFAM" id="SSF54897">
    <property type="entry name" value="Protease propeptides/inhibitors"/>
    <property type="match status" value="1"/>
</dbReference>
<dbReference type="SUPFAM" id="SSF52743">
    <property type="entry name" value="Subtilisin-like"/>
    <property type="match status" value="1"/>
</dbReference>
<dbReference type="PROSITE" id="PS51829">
    <property type="entry name" value="P_HOMO_B"/>
    <property type="match status" value="1"/>
</dbReference>
<dbReference type="PROSITE" id="PS51892">
    <property type="entry name" value="SUBTILASE"/>
    <property type="match status" value="1"/>
</dbReference>
<dbReference type="PROSITE" id="PS00136">
    <property type="entry name" value="SUBTILASE_ASP"/>
    <property type="match status" value="1"/>
</dbReference>
<dbReference type="PROSITE" id="PS00137">
    <property type="entry name" value="SUBTILASE_HIS"/>
    <property type="match status" value="1"/>
</dbReference>
<dbReference type="PROSITE" id="PS00138">
    <property type="entry name" value="SUBTILASE_SER"/>
    <property type="match status" value="1"/>
</dbReference>
<protein>
    <recommendedName>
        <fullName>Furin</fullName>
        <ecNumber evidence="9">3.4.21.75</ecNumber>
    </recommendedName>
    <alternativeName>
        <fullName>Dibasic-processing enzyme</fullName>
    </alternativeName>
    <alternativeName>
        <fullName>Paired basic amino acid residue-cleaving enzyme</fullName>
        <shortName>PACE</shortName>
    </alternativeName>
    <alternativeName>
        <fullName>Prohormone convertase 3</fullName>
    </alternativeName>
</protein>
<organism>
    <name type="scientific">Rattus norvegicus</name>
    <name type="common">Rat</name>
    <dbReference type="NCBI Taxonomy" id="10116"/>
    <lineage>
        <taxon>Eukaryota</taxon>
        <taxon>Metazoa</taxon>
        <taxon>Chordata</taxon>
        <taxon>Craniata</taxon>
        <taxon>Vertebrata</taxon>
        <taxon>Euteleostomi</taxon>
        <taxon>Mammalia</taxon>
        <taxon>Eutheria</taxon>
        <taxon>Euarchontoglires</taxon>
        <taxon>Glires</taxon>
        <taxon>Rodentia</taxon>
        <taxon>Myomorpha</taxon>
        <taxon>Muroidea</taxon>
        <taxon>Muridae</taxon>
        <taxon>Murinae</taxon>
        <taxon>Rattus</taxon>
    </lineage>
</organism>